<accession>B2IS50</accession>
<dbReference type="EMBL" id="CP001033">
    <property type="protein sequence ID" value="ACB89480.1"/>
    <property type="molecule type" value="Genomic_DNA"/>
</dbReference>
<dbReference type="RefSeq" id="WP_000616545.1">
    <property type="nucleotide sequence ID" value="NC_010582.1"/>
</dbReference>
<dbReference type="SMR" id="B2IS50"/>
<dbReference type="GeneID" id="93738967"/>
<dbReference type="KEGG" id="spw:SPCG_0228"/>
<dbReference type="HOGENOM" id="CLU_095071_2_1_9"/>
<dbReference type="GO" id="GO:0022625">
    <property type="term" value="C:cytosolic large ribosomal subunit"/>
    <property type="evidence" value="ECO:0007669"/>
    <property type="project" value="TreeGrafter"/>
</dbReference>
<dbReference type="GO" id="GO:0070180">
    <property type="term" value="F:large ribosomal subunit rRNA binding"/>
    <property type="evidence" value="ECO:0007669"/>
    <property type="project" value="TreeGrafter"/>
</dbReference>
<dbReference type="GO" id="GO:0003735">
    <property type="term" value="F:structural constituent of ribosome"/>
    <property type="evidence" value="ECO:0007669"/>
    <property type="project" value="InterPro"/>
</dbReference>
<dbReference type="GO" id="GO:0006412">
    <property type="term" value="P:translation"/>
    <property type="evidence" value="ECO:0007669"/>
    <property type="project" value="UniProtKB-UniRule"/>
</dbReference>
<dbReference type="CDD" id="cd00337">
    <property type="entry name" value="Ribosomal_uL14"/>
    <property type="match status" value="1"/>
</dbReference>
<dbReference type="FunFam" id="2.40.150.20:FF:000001">
    <property type="entry name" value="50S ribosomal protein L14"/>
    <property type="match status" value="1"/>
</dbReference>
<dbReference type="Gene3D" id="2.40.150.20">
    <property type="entry name" value="Ribosomal protein L14"/>
    <property type="match status" value="1"/>
</dbReference>
<dbReference type="HAMAP" id="MF_01367">
    <property type="entry name" value="Ribosomal_uL14"/>
    <property type="match status" value="1"/>
</dbReference>
<dbReference type="InterPro" id="IPR000218">
    <property type="entry name" value="Ribosomal_uL14"/>
</dbReference>
<dbReference type="InterPro" id="IPR005745">
    <property type="entry name" value="Ribosomal_uL14_bac-type"/>
</dbReference>
<dbReference type="InterPro" id="IPR019972">
    <property type="entry name" value="Ribosomal_uL14_CS"/>
</dbReference>
<dbReference type="InterPro" id="IPR036853">
    <property type="entry name" value="Ribosomal_uL14_sf"/>
</dbReference>
<dbReference type="NCBIfam" id="TIGR01067">
    <property type="entry name" value="rplN_bact"/>
    <property type="match status" value="1"/>
</dbReference>
<dbReference type="PANTHER" id="PTHR11761">
    <property type="entry name" value="50S/60S RIBOSOMAL PROTEIN L14/L23"/>
    <property type="match status" value="1"/>
</dbReference>
<dbReference type="PANTHER" id="PTHR11761:SF3">
    <property type="entry name" value="LARGE RIBOSOMAL SUBUNIT PROTEIN UL14M"/>
    <property type="match status" value="1"/>
</dbReference>
<dbReference type="Pfam" id="PF00238">
    <property type="entry name" value="Ribosomal_L14"/>
    <property type="match status" value="1"/>
</dbReference>
<dbReference type="SMART" id="SM01374">
    <property type="entry name" value="Ribosomal_L14"/>
    <property type="match status" value="1"/>
</dbReference>
<dbReference type="SUPFAM" id="SSF50193">
    <property type="entry name" value="Ribosomal protein L14"/>
    <property type="match status" value="1"/>
</dbReference>
<dbReference type="PROSITE" id="PS00049">
    <property type="entry name" value="RIBOSOMAL_L14"/>
    <property type="match status" value="1"/>
</dbReference>
<feature type="chain" id="PRO_1000144338" description="Large ribosomal subunit protein uL14">
    <location>
        <begin position="1"/>
        <end position="122"/>
    </location>
</feature>
<comment type="function">
    <text evidence="1">Binds to 23S rRNA. Forms part of two intersubunit bridges in the 70S ribosome.</text>
</comment>
<comment type="subunit">
    <text evidence="1">Part of the 50S ribosomal subunit. Forms a cluster with proteins L3 and L19. In the 70S ribosome, L14 and L19 interact and together make contacts with the 16S rRNA in bridges B5 and B8.</text>
</comment>
<comment type="similarity">
    <text evidence="1">Belongs to the universal ribosomal protein uL14 family.</text>
</comment>
<keyword id="KW-0687">Ribonucleoprotein</keyword>
<keyword id="KW-0689">Ribosomal protein</keyword>
<keyword id="KW-0694">RNA-binding</keyword>
<keyword id="KW-0699">rRNA-binding</keyword>
<protein>
    <recommendedName>
        <fullName evidence="1">Large ribosomal subunit protein uL14</fullName>
    </recommendedName>
    <alternativeName>
        <fullName evidence="2">50S ribosomal protein L14</fullName>
    </alternativeName>
</protein>
<evidence type="ECO:0000255" key="1">
    <source>
        <dbReference type="HAMAP-Rule" id="MF_01367"/>
    </source>
</evidence>
<evidence type="ECO:0000305" key="2"/>
<organism>
    <name type="scientific">Streptococcus pneumoniae (strain CGSP14)</name>
    <dbReference type="NCBI Taxonomy" id="516950"/>
    <lineage>
        <taxon>Bacteria</taxon>
        <taxon>Bacillati</taxon>
        <taxon>Bacillota</taxon>
        <taxon>Bacilli</taxon>
        <taxon>Lactobacillales</taxon>
        <taxon>Streptococcaceae</taxon>
        <taxon>Streptococcus</taxon>
    </lineage>
</organism>
<name>RL14_STRPS</name>
<reference key="1">
    <citation type="journal article" date="2009" name="BMC Genomics">
        <title>Genome evolution driven by host adaptations results in a more virulent and antimicrobial-resistant Streptococcus pneumoniae serotype 14.</title>
        <authorList>
            <person name="Ding F."/>
            <person name="Tang P."/>
            <person name="Hsu M.-H."/>
            <person name="Cui P."/>
            <person name="Hu S."/>
            <person name="Yu J."/>
            <person name="Chiu C.-H."/>
        </authorList>
    </citation>
    <scope>NUCLEOTIDE SEQUENCE [LARGE SCALE GENOMIC DNA]</scope>
    <source>
        <strain>CGSP14</strain>
    </source>
</reference>
<gene>
    <name evidence="1" type="primary">rplN</name>
    <name type="ordered locus">SPCG_0228</name>
</gene>
<sequence length="122" mass="13006">MIQTETRLKVADNSGAREILTIKVLGGSGRKFANIGDVIVASVKQATPGGAVKKGDVVKAVIVRTKSGARRADGSYIKFDENAAVIIREDKTPRGTRIFGPVARELREGGFMKIVSLAPEVL</sequence>
<proteinExistence type="inferred from homology"/>